<keyword id="KW-0413">Isomerase</keyword>
<keyword id="KW-0479">Metal-binding</keyword>
<keyword id="KW-0520">NAD</keyword>
<keyword id="KW-0521">NADP</keyword>
<keyword id="KW-0547">Nucleotide-binding</keyword>
<keyword id="KW-0630">Potassium</keyword>
<evidence type="ECO:0000255" key="1">
    <source>
        <dbReference type="HAMAP-Rule" id="MF_01966"/>
    </source>
</evidence>
<reference key="1">
    <citation type="journal article" date="2011" name="J. Bacteriol.">
        <title>Complete genome sequence of Leuconostoc kimchii strain C2, isolated from Kimchi.</title>
        <authorList>
            <person name="Lee S.H."/>
            <person name="Jung J.Y."/>
            <person name="Lee S.H."/>
            <person name="Jeon C.O."/>
        </authorList>
    </citation>
    <scope>NUCLEOTIDE SEQUENCE [LARGE SCALE GENOMIC DNA]</scope>
    <source>
        <strain>C2</strain>
    </source>
</reference>
<comment type="function">
    <text evidence="1">Catalyzes the epimerization of the S- and R-forms of NAD(P)HX, a damaged form of NAD(P)H that is a result of enzymatic or heat-dependent hydration. This is a prerequisite for the S-specific NAD(P)H-hydrate dehydratase to allow the repair of both epimers of NAD(P)HX.</text>
</comment>
<comment type="catalytic activity">
    <reaction evidence="1">
        <text>(6R)-NADHX = (6S)-NADHX</text>
        <dbReference type="Rhea" id="RHEA:32215"/>
        <dbReference type="ChEBI" id="CHEBI:64074"/>
        <dbReference type="ChEBI" id="CHEBI:64075"/>
        <dbReference type="EC" id="5.1.99.6"/>
    </reaction>
</comment>
<comment type="catalytic activity">
    <reaction evidence="1">
        <text>(6R)-NADPHX = (6S)-NADPHX</text>
        <dbReference type="Rhea" id="RHEA:32227"/>
        <dbReference type="ChEBI" id="CHEBI:64076"/>
        <dbReference type="ChEBI" id="CHEBI:64077"/>
        <dbReference type="EC" id="5.1.99.6"/>
    </reaction>
</comment>
<comment type="cofactor">
    <cofactor evidence="1">
        <name>K(+)</name>
        <dbReference type="ChEBI" id="CHEBI:29103"/>
    </cofactor>
    <text evidence="1">Binds 1 potassium ion per subunit.</text>
</comment>
<comment type="similarity">
    <text evidence="1">Belongs to the NnrE/AIBP family.</text>
</comment>
<sequence>MQLVTAAEMQTIDNYTVETIGMPQDVLIERAAMSVIDVIGAGHFNLDHILVLAGLGNNGADGVAISRLLYAQGFNVSLQFVGNVTRAKDSVKHQLDIIEKYGLVHAEKSDFNEATLIIDAIFGTGLNNLLPEGLQKMIKAANHIEKTVIAVDTPTGIDATTGEVRGAALKAHTTVTFGYNKIGLTQRVGGYLSGNVIVKDIGLLTPQDFNFSLPDKENSPSVATS</sequence>
<feature type="chain" id="PRO_0000416369" description="NAD(P)H-hydrate epimerase">
    <location>
        <begin position="1"/>
        <end position="225"/>
    </location>
</feature>
<feature type="domain" description="YjeF N-terminal" evidence="1">
    <location>
        <begin position="9"/>
        <end position="209"/>
    </location>
</feature>
<feature type="binding site" evidence="1">
    <location>
        <begin position="57"/>
        <end position="61"/>
    </location>
    <ligand>
        <name>(6S)-NADPHX</name>
        <dbReference type="ChEBI" id="CHEBI:64076"/>
    </ligand>
</feature>
<feature type="binding site" evidence="1">
    <location>
        <position position="58"/>
    </location>
    <ligand>
        <name>K(+)</name>
        <dbReference type="ChEBI" id="CHEBI:29103"/>
    </ligand>
</feature>
<feature type="binding site" evidence="1">
    <location>
        <position position="119"/>
    </location>
    <ligand>
        <name>K(+)</name>
        <dbReference type="ChEBI" id="CHEBI:29103"/>
    </ligand>
</feature>
<feature type="binding site" evidence="1">
    <location>
        <begin position="123"/>
        <end position="129"/>
    </location>
    <ligand>
        <name>(6S)-NADPHX</name>
        <dbReference type="ChEBI" id="CHEBI:64076"/>
    </ligand>
</feature>
<feature type="binding site" evidence="1">
    <location>
        <position position="152"/>
    </location>
    <ligand>
        <name>(6S)-NADPHX</name>
        <dbReference type="ChEBI" id="CHEBI:64076"/>
    </ligand>
</feature>
<feature type="binding site" evidence="1">
    <location>
        <position position="155"/>
    </location>
    <ligand>
        <name>K(+)</name>
        <dbReference type="ChEBI" id="CHEBI:29103"/>
    </ligand>
</feature>
<name>NNRE_LEUS2</name>
<gene>
    <name evidence="1" type="primary">nnrE</name>
    <name type="ordered locus">LGMK_05830</name>
</gene>
<accession>F8HWV7</accession>
<organism>
    <name type="scientific">Leuconostoc sp. (strain C2)</name>
    <dbReference type="NCBI Taxonomy" id="979982"/>
    <lineage>
        <taxon>Bacteria</taxon>
        <taxon>Bacillati</taxon>
        <taxon>Bacillota</taxon>
        <taxon>Bacilli</taxon>
        <taxon>Lactobacillales</taxon>
        <taxon>Lactobacillaceae</taxon>
        <taxon>Leuconostoc</taxon>
    </lineage>
</organism>
<protein>
    <recommendedName>
        <fullName evidence="1">NAD(P)H-hydrate epimerase</fullName>
        <ecNumber evidence="1">5.1.99.6</ecNumber>
    </recommendedName>
    <alternativeName>
        <fullName evidence="1">NAD(P)HX epimerase</fullName>
    </alternativeName>
</protein>
<dbReference type="EC" id="5.1.99.6" evidence="1"/>
<dbReference type="EMBL" id="CP002898">
    <property type="protein sequence ID" value="AEJ31223.1"/>
    <property type="molecule type" value="Genomic_DNA"/>
</dbReference>
<dbReference type="RefSeq" id="WP_013975206.1">
    <property type="nucleotide sequence ID" value="NC_015734.1"/>
</dbReference>
<dbReference type="SMR" id="F8HWV7"/>
<dbReference type="KEGG" id="lec:LGMK_05830"/>
<dbReference type="HOGENOM" id="CLU_024853_0_1_9"/>
<dbReference type="GO" id="GO:0000932">
    <property type="term" value="C:P-body"/>
    <property type="evidence" value="ECO:0007669"/>
    <property type="project" value="TreeGrafter"/>
</dbReference>
<dbReference type="GO" id="GO:0046872">
    <property type="term" value="F:metal ion binding"/>
    <property type="evidence" value="ECO:0007669"/>
    <property type="project" value="UniProtKB-KW"/>
</dbReference>
<dbReference type="GO" id="GO:0003729">
    <property type="term" value="F:mRNA binding"/>
    <property type="evidence" value="ECO:0007669"/>
    <property type="project" value="TreeGrafter"/>
</dbReference>
<dbReference type="GO" id="GO:0052856">
    <property type="term" value="F:NAD(P)HX epimerase activity"/>
    <property type="evidence" value="ECO:0007669"/>
    <property type="project" value="UniProtKB-UniRule"/>
</dbReference>
<dbReference type="GO" id="GO:0000166">
    <property type="term" value="F:nucleotide binding"/>
    <property type="evidence" value="ECO:0007669"/>
    <property type="project" value="UniProtKB-KW"/>
</dbReference>
<dbReference type="GO" id="GO:0031087">
    <property type="term" value="P:deadenylation-independent decapping of nuclear-transcribed mRNA"/>
    <property type="evidence" value="ECO:0007669"/>
    <property type="project" value="TreeGrafter"/>
</dbReference>
<dbReference type="GO" id="GO:0033962">
    <property type="term" value="P:P-body assembly"/>
    <property type="evidence" value="ECO:0007669"/>
    <property type="project" value="TreeGrafter"/>
</dbReference>
<dbReference type="Gene3D" id="3.40.50.10260">
    <property type="entry name" value="YjeF N-terminal domain"/>
    <property type="match status" value="1"/>
</dbReference>
<dbReference type="HAMAP" id="MF_01966">
    <property type="entry name" value="NADHX_epimerase"/>
    <property type="match status" value="1"/>
</dbReference>
<dbReference type="InterPro" id="IPR004443">
    <property type="entry name" value="YjeF_N_dom"/>
</dbReference>
<dbReference type="InterPro" id="IPR036652">
    <property type="entry name" value="YjeF_N_dom_sf"/>
</dbReference>
<dbReference type="NCBIfam" id="TIGR00197">
    <property type="entry name" value="yjeF_nterm"/>
    <property type="match status" value="1"/>
</dbReference>
<dbReference type="PANTHER" id="PTHR13612">
    <property type="entry name" value="ENHANCER OF MRNA-DECAPPING PROTEIN 3"/>
    <property type="match status" value="1"/>
</dbReference>
<dbReference type="PANTHER" id="PTHR13612:SF0">
    <property type="entry name" value="ENHANCER OF MRNA-DECAPPING PROTEIN 3"/>
    <property type="match status" value="1"/>
</dbReference>
<dbReference type="Pfam" id="PF03853">
    <property type="entry name" value="YjeF_N"/>
    <property type="match status" value="1"/>
</dbReference>
<dbReference type="SUPFAM" id="SSF64153">
    <property type="entry name" value="YjeF N-terminal domain-like"/>
    <property type="match status" value="1"/>
</dbReference>
<dbReference type="PROSITE" id="PS51385">
    <property type="entry name" value="YJEF_N"/>
    <property type="match status" value="1"/>
</dbReference>
<proteinExistence type="inferred from homology"/>